<protein>
    <recommendedName>
        <fullName evidence="1">Aspartate--tRNA ligase</fullName>
        <ecNumber evidence="1">6.1.1.12</ecNumber>
    </recommendedName>
    <alternativeName>
        <fullName evidence="1">Aspartyl-tRNA synthetase</fullName>
        <shortName evidence="1">AspRS</shortName>
    </alternativeName>
</protein>
<evidence type="ECO:0000255" key="1">
    <source>
        <dbReference type="HAMAP-Rule" id="MF_00044"/>
    </source>
</evidence>
<proteinExistence type="inferred from homology"/>
<keyword id="KW-0030">Aminoacyl-tRNA synthetase</keyword>
<keyword id="KW-0067">ATP-binding</keyword>
<keyword id="KW-0963">Cytoplasm</keyword>
<keyword id="KW-0436">Ligase</keyword>
<keyword id="KW-0547">Nucleotide-binding</keyword>
<keyword id="KW-0648">Protein biosynthesis</keyword>
<sequence length="586" mass="68076">MRTKYCGNIRISHVNKKVKLCGWVHKVRNLGQFIFVDMRDYTGLVQVIFELKNYTIFKKALNLRNEFCIQVFGTVQKREKKNQNIKIRTGEIEILANVLNILNTSKSLPLNFTQENNDDSRLKYRYLDLRSFDILENLKIRNKITYLIRNFMTKKNFLDIETPILTKSTPEGARDYLVPSRNHYGKFYALPQSPQLFKQILMISGIDRYYQIVKCFRDEDLRSDRQPEFTQIDIEVSFMSAKKIRNLVENLIKKLWLEIRNINLKKFPQISFHEAMKKYGSDKPDLRNPIEIIDVSNIFKDKKFISFFNLNPQKNNRIALLCISKGAHLSRKKIDDYTKYVQRFDAKKLFYIKIKECKLGCLGIHSSIKNILDEIILKEIIEKSQSKNGDILFLIADQEHIVNKSLGMLRLKIGIDLNITKKNRWEPLWIVNFPMFDKDIQGNLSSVHHPFTAVKNMDREILKNSPDLAISDSYDLIINGYEIGGGSVRIHDVNMQKQVFDIIGIKKSMQNEKFGFLIEALKYGAPPHAGIALGLDRIVMLLTNSKNIRDVIAFPKTTSATCLMTNSPSTVDNLLLQELAIKHLKK</sequence>
<accession>B8D9A6</accession>
<gene>
    <name evidence="1" type="primary">aspS</name>
    <name type="ordered locus">BUAP5A_309</name>
</gene>
<reference key="1">
    <citation type="journal article" date="2009" name="Science">
        <title>The dynamics and time scale of ongoing genomic erosion in symbiotic bacteria.</title>
        <authorList>
            <person name="Moran N.A."/>
            <person name="McLaughlin H.J."/>
            <person name="Sorek R."/>
        </authorList>
    </citation>
    <scope>NUCLEOTIDE SEQUENCE [LARGE SCALE GENOMIC DNA]</scope>
    <source>
        <strain>5A</strain>
    </source>
</reference>
<comment type="function">
    <text evidence="1">Catalyzes the attachment of L-aspartate to tRNA(Asp) in a two-step reaction: L-aspartate is first activated by ATP to form Asp-AMP and then transferred to the acceptor end of tRNA(Asp).</text>
</comment>
<comment type="catalytic activity">
    <reaction evidence="1">
        <text>tRNA(Asp) + L-aspartate + ATP = L-aspartyl-tRNA(Asp) + AMP + diphosphate</text>
        <dbReference type="Rhea" id="RHEA:19649"/>
        <dbReference type="Rhea" id="RHEA-COMP:9660"/>
        <dbReference type="Rhea" id="RHEA-COMP:9678"/>
        <dbReference type="ChEBI" id="CHEBI:29991"/>
        <dbReference type="ChEBI" id="CHEBI:30616"/>
        <dbReference type="ChEBI" id="CHEBI:33019"/>
        <dbReference type="ChEBI" id="CHEBI:78442"/>
        <dbReference type="ChEBI" id="CHEBI:78516"/>
        <dbReference type="ChEBI" id="CHEBI:456215"/>
        <dbReference type="EC" id="6.1.1.12"/>
    </reaction>
</comment>
<comment type="subunit">
    <text evidence="1">Homodimer.</text>
</comment>
<comment type="subcellular location">
    <subcellularLocation>
        <location evidence="1">Cytoplasm</location>
    </subcellularLocation>
</comment>
<comment type="similarity">
    <text evidence="1">Belongs to the class-II aminoacyl-tRNA synthetase family. Type 1 subfamily.</text>
</comment>
<name>SYD_BUCA5</name>
<feature type="chain" id="PRO_1000198967" description="Aspartate--tRNA ligase">
    <location>
        <begin position="1"/>
        <end position="586"/>
    </location>
</feature>
<feature type="region of interest" description="Aspartate" evidence="1">
    <location>
        <begin position="195"/>
        <end position="198"/>
    </location>
</feature>
<feature type="binding site" evidence="1">
    <location>
        <position position="171"/>
    </location>
    <ligand>
        <name>L-aspartate</name>
        <dbReference type="ChEBI" id="CHEBI:29991"/>
    </ligand>
</feature>
<feature type="binding site" evidence="1">
    <location>
        <begin position="217"/>
        <end position="219"/>
    </location>
    <ligand>
        <name>ATP</name>
        <dbReference type="ChEBI" id="CHEBI:30616"/>
    </ligand>
</feature>
<feature type="binding site" evidence="1">
    <location>
        <position position="217"/>
    </location>
    <ligand>
        <name>L-aspartate</name>
        <dbReference type="ChEBI" id="CHEBI:29991"/>
    </ligand>
</feature>
<feature type="binding site" evidence="1">
    <location>
        <position position="226"/>
    </location>
    <ligand>
        <name>ATP</name>
        <dbReference type="ChEBI" id="CHEBI:30616"/>
    </ligand>
</feature>
<feature type="binding site" evidence="1">
    <location>
        <position position="448"/>
    </location>
    <ligand>
        <name>L-aspartate</name>
        <dbReference type="ChEBI" id="CHEBI:29991"/>
    </ligand>
</feature>
<feature type="binding site" evidence="1">
    <location>
        <position position="482"/>
    </location>
    <ligand>
        <name>ATP</name>
        <dbReference type="ChEBI" id="CHEBI:30616"/>
    </ligand>
</feature>
<feature type="binding site" evidence="1">
    <location>
        <position position="489"/>
    </location>
    <ligand>
        <name>L-aspartate</name>
        <dbReference type="ChEBI" id="CHEBI:29991"/>
    </ligand>
</feature>
<feature type="binding site" evidence="1">
    <location>
        <begin position="534"/>
        <end position="537"/>
    </location>
    <ligand>
        <name>ATP</name>
        <dbReference type="ChEBI" id="CHEBI:30616"/>
    </ligand>
</feature>
<organism>
    <name type="scientific">Buchnera aphidicola subsp. Acyrthosiphon pisum (strain 5A)</name>
    <dbReference type="NCBI Taxonomy" id="563178"/>
    <lineage>
        <taxon>Bacteria</taxon>
        <taxon>Pseudomonadati</taxon>
        <taxon>Pseudomonadota</taxon>
        <taxon>Gammaproteobacteria</taxon>
        <taxon>Enterobacterales</taxon>
        <taxon>Erwiniaceae</taxon>
        <taxon>Buchnera</taxon>
    </lineage>
</organism>
<dbReference type="EC" id="6.1.1.12" evidence="1"/>
<dbReference type="EMBL" id="CP001161">
    <property type="protein sequence ID" value="ACL30677.1"/>
    <property type="molecule type" value="Genomic_DNA"/>
</dbReference>
<dbReference type="RefSeq" id="WP_009874270.1">
    <property type="nucleotide sequence ID" value="NC_011833.1"/>
</dbReference>
<dbReference type="SMR" id="B8D9A6"/>
<dbReference type="KEGG" id="bap:BUAP5A_309"/>
<dbReference type="HOGENOM" id="CLU_014330_3_2_6"/>
<dbReference type="OrthoDB" id="9762036at2"/>
<dbReference type="Proteomes" id="UP000006904">
    <property type="component" value="Chromosome"/>
</dbReference>
<dbReference type="GO" id="GO:0005737">
    <property type="term" value="C:cytoplasm"/>
    <property type="evidence" value="ECO:0007669"/>
    <property type="project" value="UniProtKB-SubCell"/>
</dbReference>
<dbReference type="GO" id="GO:0004815">
    <property type="term" value="F:aspartate-tRNA ligase activity"/>
    <property type="evidence" value="ECO:0007669"/>
    <property type="project" value="UniProtKB-UniRule"/>
</dbReference>
<dbReference type="GO" id="GO:0005524">
    <property type="term" value="F:ATP binding"/>
    <property type="evidence" value="ECO:0007669"/>
    <property type="project" value="UniProtKB-UniRule"/>
</dbReference>
<dbReference type="GO" id="GO:0003676">
    <property type="term" value="F:nucleic acid binding"/>
    <property type="evidence" value="ECO:0007669"/>
    <property type="project" value="InterPro"/>
</dbReference>
<dbReference type="GO" id="GO:0006422">
    <property type="term" value="P:aspartyl-tRNA aminoacylation"/>
    <property type="evidence" value="ECO:0007669"/>
    <property type="project" value="UniProtKB-UniRule"/>
</dbReference>
<dbReference type="CDD" id="cd00777">
    <property type="entry name" value="AspRS_core"/>
    <property type="match status" value="1"/>
</dbReference>
<dbReference type="CDD" id="cd04317">
    <property type="entry name" value="EcAspRS_like_N"/>
    <property type="match status" value="1"/>
</dbReference>
<dbReference type="Gene3D" id="3.30.930.10">
    <property type="entry name" value="Bira Bifunctional Protein, Domain 2"/>
    <property type="match status" value="1"/>
</dbReference>
<dbReference type="Gene3D" id="3.30.1360.30">
    <property type="entry name" value="GAD-like domain"/>
    <property type="match status" value="1"/>
</dbReference>
<dbReference type="Gene3D" id="2.40.50.140">
    <property type="entry name" value="Nucleic acid-binding proteins"/>
    <property type="match status" value="1"/>
</dbReference>
<dbReference type="HAMAP" id="MF_00044">
    <property type="entry name" value="Asp_tRNA_synth_type1"/>
    <property type="match status" value="1"/>
</dbReference>
<dbReference type="InterPro" id="IPR004364">
    <property type="entry name" value="Aa-tRNA-synt_II"/>
</dbReference>
<dbReference type="InterPro" id="IPR006195">
    <property type="entry name" value="aa-tRNA-synth_II"/>
</dbReference>
<dbReference type="InterPro" id="IPR045864">
    <property type="entry name" value="aa-tRNA-synth_II/BPL/LPL"/>
</dbReference>
<dbReference type="InterPro" id="IPR004524">
    <property type="entry name" value="Asp-tRNA-ligase_1"/>
</dbReference>
<dbReference type="InterPro" id="IPR047089">
    <property type="entry name" value="Asp-tRNA-ligase_1_N"/>
</dbReference>
<dbReference type="InterPro" id="IPR002312">
    <property type="entry name" value="Asp/Asn-tRNA-synth_IIb"/>
</dbReference>
<dbReference type="InterPro" id="IPR047090">
    <property type="entry name" value="AspRS_core"/>
</dbReference>
<dbReference type="InterPro" id="IPR004115">
    <property type="entry name" value="GAD-like_sf"/>
</dbReference>
<dbReference type="InterPro" id="IPR029351">
    <property type="entry name" value="GAD_dom"/>
</dbReference>
<dbReference type="InterPro" id="IPR012340">
    <property type="entry name" value="NA-bd_OB-fold"/>
</dbReference>
<dbReference type="InterPro" id="IPR004365">
    <property type="entry name" value="NA-bd_OB_tRNA"/>
</dbReference>
<dbReference type="NCBIfam" id="TIGR00459">
    <property type="entry name" value="aspS_bact"/>
    <property type="match status" value="1"/>
</dbReference>
<dbReference type="NCBIfam" id="NF001750">
    <property type="entry name" value="PRK00476.1"/>
    <property type="match status" value="1"/>
</dbReference>
<dbReference type="PANTHER" id="PTHR22594:SF5">
    <property type="entry name" value="ASPARTATE--TRNA LIGASE, MITOCHONDRIAL"/>
    <property type="match status" value="1"/>
</dbReference>
<dbReference type="PANTHER" id="PTHR22594">
    <property type="entry name" value="ASPARTYL/LYSYL-TRNA SYNTHETASE"/>
    <property type="match status" value="1"/>
</dbReference>
<dbReference type="Pfam" id="PF02938">
    <property type="entry name" value="GAD"/>
    <property type="match status" value="1"/>
</dbReference>
<dbReference type="Pfam" id="PF00152">
    <property type="entry name" value="tRNA-synt_2"/>
    <property type="match status" value="1"/>
</dbReference>
<dbReference type="Pfam" id="PF01336">
    <property type="entry name" value="tRNA_anti-codon"/>
    <property type="match status" value="1"/>
</dbReference>
<dbReference type="PRINTS" id="PR01042">
    <property type="entry name" value="TRNASYNTHASP"/>
</dbReference>
<dbReference type="SUPFAM" id="SSF55681">
    <property type="entry name" value="Class II aaRS and biotin synthetases"/>
    <property type="match status" value="1"/>
</dbReference>
<dbReference type="SUPFAM" id="SSF55261">
    <property type="entry name" value="GAD domain-like"/>
    <property type="match status" value="1"/>
</dbReference>
<dbReference type="SUPFAM" id="SSF50249">
    <property type="entry name" value="Nucleic acid-binding proteins"/>
    <property type="match status" value="1"/>
</dbReference>
<dbReference type="PROSITE" id="PS50862">
    <property type="entry name" value="AA_TRNA_LIGASE_II"/>
    <property type="match status" value="1"/>
</dbReference>